<keyword id="KW-0349">Heme</keyword>
<keyword id="KW-0408">Iron</keyword>
<keyword id="KW-0479">Metal-binding</keyword>
<keyword id="KW-0503">Monooxygenase</keyword>
<keyword id="KW-0560">Oxidoreductase</keyword>
<keyword id="KW-1185">Reference proteome</keyword>
<sequence length="405" mass="44581">MTSVMSHEFQLATAETWPNPWPMYRALRDHDPVHHVVPPQRPEYDYYVLSRHADVWSAARDHQTFSSAQGLTVNYGELEMIGLHDTPPMVMQDPPVHTEFRKLVSRGFTPRQVETVEPTVRKFVVERLEKLRANGGGDIVTELFKPLPSMVVAHYLGVPEEDWTQFDGWTQAIVAANAVDGATTGALDAVGSMMAYFTGLIERRRTEPADDAISHLVAAGVGADGDTAGTLSILAFTFTMVTGGNDTVTGMLGGSMPLLHRRPDQRRLLLDDPEGIPDAVEELLRLTSPVQGLARTTTRDVTIGDTTIPAGRRVLLLYGSANRDERQYGPDAAELDVTRCPRNILTFSHGAHHCLGAAAARMQCRVALTELLARCPDFEVAESRIVWSGGSYVRRPLSVPFRVTS</sequence>
<reference key="1">
    <citation type="journal article" date="2002" name="J. Bacteriol.">
        <title>Whole-genome comparison of Mycobacterium tuberculosis clinical and laboratory strains.</title>
        <authorList>
            <person name="Fleischmann R.D."/>
            <person name="Alland D."/>
            <person name="Eisen J.A."/>
            <person name="Carpenter L."/>
            <person name="White O."/>
            <person name="Peterson J.D."/>
            <person name="DeBoy R.T."/>
            <person name="Dodson R.J."/>
            <person name="Gwinn M.L."/>
            <person name="Haft D.H."/>
            <person name="Hickey E.K."/>
            <person name="Kolonay J.F."/>
            <person name="Nelson W.C."/>
            <person name="Umayam L.A."/>
            <person name="Ermolaeva M.D."/>
            <person name="Salzberg S.L."/>
            <person name="Delcher A."/>
            <person name="Utterback T.R."/>
            <person name="Weidman J.F."/>
            <person name="Khouri H.M."/>
            <person name="Gill J."/>
            <person name="Mikula A."/>
            <person name="Bishai W."/>
            <person name="Jacobs W.R. Jr."/>
            <person name="Venter J.C."/>
            <person name="Fraser C.M."/>
        </authorList>
    </citation>
    <scope>NUCLEOTIDE SEQUENCE [LARGE SCALE GENOMIC DNA]</scope>
    <source>
        <strain>CDC 1551 / Oshkosh</strain>
    </source>
</reference>
<dbReference type="EC" id="1.14.-.-"/>
<dbReference type="EMBL" id="AE000516">
    <property type="protein sequence ID" value="AAK45553.1"/>
    <property type="molecule type" value="Genomic_DNA"/>
</dbReference>
<dbReference type="PIR" id="H70752">
    <property type="entry name" value="H70752"/>
</dbReference>
<dbReference type="RefSeq" id="WP_003406352.1">
    <property type="nucleotide sequence ID" value="NZ_KK341227.1"/>
</dbReference>
<dbReference type="SMR" id="P9WPN4"/>
<dbReference type="BindingDB" id="P9WPN4"/>
<dbReference type="GeneID" id="45425226"/>
<dbReference type="KEGG" id="mtc:MT1295"/>
<dbReference type="PATRIC" id="fig|83331.31.peg.1398"/>
<dbReference type="HOGENOM" id="CLU_033716_0_2_11"/>
<dbReference type="Proteomes" id="UP000001020">
    <property type="component" value="Chromosome"/>
</dbReference>
<dbReference type="GO" id="GO:0036199">
    <property type="term" value="F:cholest-4-en-3-one 26-monooxygenase activity"/>
    <property type="evidence" value="ECO:0007669"/>
    <property type="project" value="TreeGrafter"/>
</dbReference>
<dbReference type="GO" id="GO:0020037">
    <property type="term" value="F:heme binding"/>
    <property type="evidence" value="ECO:0007669"/>
    <property type="project" value="InterPro"/>
</dbReference>
<dbReference type="GO" id="GO:0005506">
    <property type="term" value="F:iron ion binding"/>
    <property type="evidence" value="ECO:0007669"/>
    <property type="project" value="InterPro"/>
</dbReference>
<dbReference type="GO" id="GO:0008395">
    <property type="term" value="F:steroid hydroxylase activity"/>
    <property type="evidence" value="ECO:0007669"/>
    <property type="project" value="TreeGrafter"/>
</dbReference>
<dbReference type="GO" id="GO:0006707">
    <property type="term" value="P:cholesterol catabolic process"/>
    <property type="evidence" value="ECO:0007669"/>
    <property type="project" value="TreeGrafter"/>
</dbReference>
<dbReference type="CDD" id="cd11078">
    <property type="entry name" value="CYP130-like"/>
    <property type="match status" value="1"/>
</dbReference>
<dbReference type="FunFam" id="1.10.630.10:FF:000018">
    <property type="entry name" value="Cytochrome P450 monooxygenase"/>
    <property type="match status" value="1"/>
</dbReference>
<dbReference type="Gene3D" id="1.10.630.10">
    <property type="entry name" value="Cytochrome P450"/>
    <property type="match status" value="1"/>
</dbReference>
<dbReference type="InterPro" id="IPR001128">
    <property type="entry name" value="Cyt_P450"/>
</dbReference>
<dbReference type="InterPro" id="IPR002397">
    <property type="entry name" value="Cyt_P450_B"/>
</dbReference>
<dbReference type="InterPro" id="IPR017972">
    <property type="entry name" value="Cyt_P450_CS"/>
</dbReference>
<dbReference type="InterPro" id="IPR036396">
    <property type="entry name" value="Cyt_P450_sf"/>
</dbReference>
<dbReference type="PANTHER" id="PTHR46696:SF4">
    <property type="entry name" value="BIOTIN BIOSYNTHESIS CYTOCHROME P450"/>
    <property type="match status" value="1"/>
</dbReference>
<dbReference type="PANTHER" id="PTHR46696">
    <property type="entry name" value="P450, PUTATIVE (EUROFUNG)-RELATED"/>
    <property type="match status" value="1"/>
</dbReference>
<dbReference type="Pfam" id="PF00067">
    <property type="entry name" value="p450"/>
    <property type="match status" value="1"/>
</dbReference>
<dbReference type="PRINTS" id="PR00359">
    <property type="entry name" value="BP450"/>
</dbReference>
<dbReference type="SUPFAM" id="SSF48264">
    <property type="entry name" value="Cytochrome P450"/>
    <property type="match status" value="1"/>
</dbReference>
<dbReference type="PROSITE" id="PS00086">
    <property type="entry name" value="CYTOCHROME_P450"/>
    <property type="match status" value="1"/>
</dbReference>
<name>CP130_MYCTO</name>
<protein>
    <recommendedName>
        <fullName>Cytochrome P450 130</fullName>
        <ecNumber>1.14.-.-</ecNumber>
    </recommendedName>
</protein>
<accession>P9WPN4</accession>
<accession>L0T6B9</accession>
<accession>Q11062</accession>
<comment type="cofactor">
    <cofactor evidence="1">
        <name>heme</name>
        <dbReference type="ChEBI" id="CHEBI:30413"/>
    </cofactor>
</comment>
<comment type="subunit">
    <text evidence="1">Homodimer.</text>
</comment>
<comment type="similarity">
    <text evidence="2">Belongs to the cytochrome P450 family.</text>
</comment>
<evidence type="ECO:0000250" key="1"/>
<evidence type="ECO:0000305" key="2"/>
<feature type="chain" id="PRO_0000426921" description="Cytochrome P450 130">
    <location>
        <begin position="1"/>
        <end position="405"/>
    </location>
</feature>
<feature type="binding site" evidence="1">
    <location>
        <position position="93"/>
    </location>
    <ligand>
        <name>substrate</name>
    </ligand>
</feature>
<feature type="binding site" evidence="1">
    <location>
        <position position="97"/>
    </location>
    <ligand>
        <name>substrate</name>
    </ligand>
</feature>
<feature type="binding site" evidence="1">
    <location>
        <position position="101"/>
    </location>
    <ligand>
        <name>heme</name>
        <dbReference type="ChEBI" id="CHEBI:30413"/>
    </ligand>
</feature>
<feature type="binding site" evidence="1">
    <location>
        <position position="243"/>
    </location>
    <ligand>
        <name>heme</name>
        <dbReference type="ChEBI" id="CHEBI:30413"/>
    </ligand>
</feature>
<feature type="binding site" evidence="1">
    <location>
        <position position="295"/>
    </location>
    <ligand>
        <name>heme</name>
        <dbReference type="ChEBI" id="CHEBI:30413"/>
    </ligand>
</feature>
<feature type="binding site" evidence="1">
    <location>
        <position position="318"/>
    </location>
    <ligand>
        <name>heme</name>
        <dbReference type="ChEBI" id="CHEBI:30413"/>
    </ligand>
</feature>
<feature type="binding site" evidence="1">
    <location>
        <position position="348"/>
    </location>
    <ligand>
        <name>heme</name>
        <dbReference type="ChEBI" id="CHEBI:30413"/>
    </ligand>
</feature>
<feature type="binding site" evidence="1">
    <location>
        <position position="352"/>
    </location>
    <ligand>
        <name>heme</name>
        <dbReference type="ChEBI" id="CHEBI:30413"/>
    </ligand>
</feature>
<feature type="binding site" description="axial binding residue" evidence="1">
    <location>
        <position position="354"/>
    </location>
    <ligand>
        <name>heme</name>
        <dbReference type="ChEBI" id="CHEBI:30413"/>
    </ligand>
    <ligandPart>
        <name>Fe</name>
        <dbReference type="ChEBI" id="CHEBI:18248"/>
    </ligandPart>
</feature>
<proteinExistence type="inferred from homology"/>
<organism>
    <name type="scientific">Mycobacterium tuberculosis (strain CDC 1551 / Oshkosh)</name>
    <dbReference type="NCBI Taxonomy" id="83331"/>
    <lineage>
        <taxon>Bacteria</taxon>
        <taxon>Bacillati</taxon>
        <taxon>Actinomycetota</taxon>
        <taxon>Actinomycetes</taxon>
        <taxon>Mycobacteriales</taxon>
        <taxon>Mycobacteriaceae</taxon>
        <taxon>Mycobacterium</taxon>
        <taxon>Mycobacterium tuberculosis complex</taxon>
    </lineage>
</organism>
<gene>
    <name type="primary">cyp130</name>
    <name type="ordered locus">MT1295</name>
</gene>